<evidence type="ECO:0000255" key="1">
    <source>
        <dbReference type="HAMAP-Rule" id="MF_00366"/>
    </source>
</evidence>
<protein>
    <recommendedName>
        <fullName evidence="1">DNA-directed RNA polymerase subunit omega</fullName>
        <shortName evidence="1">RNAP omega subunit</shortName>
        <ecNumber evidence="1">2.7.7.6</ecNumber>
    </recommendedName>
    <alternativeName>
        <fullName evidence="1">RNA polymerase omega subunit</fullName>
    </alternativeName>
    <alternativeName>
        <fullName evidence="1">Transcriptase subunit omega</fullName>
    </alternativeName>
</protein>
<comment type="function">
    <text evidence="1">Promotes RNA polymerase assembly. Latches the N- and C-terminal regions of the beta' subunit thereby facilitating its interaction with the beta and alpha subunits.</text>
</comment>
<comment type="catalytic activity">
    <reaction evidence="1">
        <text>RNA(n) + a ribonucleoside 5'-triphosphate = RNA(n+1) + diphosphate</text>
        <dbReference type="Rhea" id="RHEA:21248"/>
        <dbReference type="Rhea" id="RHEA-COMP:14527"/>
        <dbReference type="Rhea" id="RHEA-COMP:17342"/>
        <dbReference type="ChEBI" id="CHEBI:33019"/>
        <dbReference type="ChEBI" id="CHEBI:61557"/>
        <dbReference type="ChEBI" id="CHEBI:140395"/>
        <dbReference type="EC" id="2.7.7.6"/>
    </reaction>
</comment>
<comment type="subunit">
    <text evidence="1">The RNAP catalytic core consists of 2 alpha, 1 beta, 1 beta' and 1 omega subunit. When a sigma factor is associated with the core the holoenzyme is formed, which can initiate transcription.</text>
</comment>
<comment type="similarity">
    <text evidence="1">Belongs to the RNA polymerase subunit omega family.</text>
</comment>
<keyword id="KW-0240">DNA-directed RNA polymerase</keyword>
<keyword id="KW-0548">Nucleotidyltransferase</keyword>
<keyword id="KW-0804">Transcription</keyword>
<keyword id="KW-0808">Transferase</keyword>
<gene>
    <name evidence="1" type="primary">rpoZ</name>
    <name type="ordered locus">Teth514_1760</name>
</gene>
<organism>
    <name type="scientific">Thermoanaerobacter sp. (strain X514)</name>
    <dbReference type="NCBI Taxonomy" id="399726"/>
    <lineage>
        <taxon>Bacteria</taxon>
        <taxon>Bacillati</taxon>
        <taxon>Bacillota</taxon>
        <taxon>Clostridia</taxon>
        <taxon>Thermoanaerobacterales</taxon>
        <taxon>Thermoanaerobacteraceae</taxon>
        <taxon>Thermoanaerobacter</taxon>
    </lineage>
</organism>
<dbReference type="EC" id="2.7.7.6" evidence="1"/>
<dbReference type="EMBL" id="CP000923">
    <property type="protein sequence ID" value="ABY93046.1"/>
    <property type="molecule type" value="Genomic_DNA"/>
</dbReference>
<dbReference type="RefSeq" id="WP_009052444.1">
    <property type="nucleotide sequence ID" value="NC_010320.1"/>
</dbReference>
<dbReference type="SMR" id="B0K295"/>
<dbReference type="KEGG" id="tex:Teth514_1760"/>
<dbReference type="HOGENOM" id="CLU_125406_6_1_9"/>
<dbReference type="Proteomes" id="UP000002155">
    <property type="component" value="Chromosome"/>
</dbReference>
<dbReference type="GO" id="GO:0000428">
    <property type="term" value="C:DNA-directed RNA polymerase complex"/>
    <property type="evidence" value="ECO:0007669"/>
    <property type="project" value="UniProtKB-KW"/>
</dbReference>
<dbReference type="GO" id="GO:0003677">
    <property type="term" value="F:DNA binding"/>
    <property type="evidence" value="ECO:0007669"/>
    <property type="project" value="UniProtKB-UniRule"/>
</dbReference>
<dbReference type="GO" id="GO:0003899">
    <property type="term" value="F:DNA-directed RNA polymerase activity"/>
    <property type="evidence" value="ECO:0007669"/>
    <property type="project" value="UniProtKB-UniRule"/>
</dbReference>
<dbReference type="GO" id="GO:0006351">
    <property type="term" value="P:DNA-templated transcription"/>
    <property type="evidence" value="ECO:0007669"/>
    <property type="project" value="UniProtKB-UniRule"/>
</dbReference>
<dbReference type="Gene3D" id="3.90.940.10">
    <property type="match status" value="1"/>
</dbReference>
<dbReference type="HAMAP" id="MF_00366">
    <property type="entry name" value="RNApol_bact_RpoZ"/>
    <property type="match status" value="1"/>
</dbReference>
<dbReference type="InterPro" id="IPR003716">
    <property type="entry name" value="DNA-dir_RNA_pol_omega"/>
</dbReference>
<dbReference type="InterPro" id="IPR006110">
    <property type="entry name" value="Pol_omega/Rpo6/RPB6"/>
</dbReference>
<dbReference type="InterPro" id="IPR036161">
    <property type="entry name" value="RPB6/omega-like_sf"/>
</dbReference>
<dbReference type="NCBIfam" id="TIGR00690">
    <property type="entry name" value="rpoZ"/>
    <property type="match status" value="1"/>
</dbReference>
<dbReference type="PANTHER" id="PTHR34476">
    <property type="entry name" value="DNA-DIRECTED RNA POLYMERASE SUBUNIT OMEGA"/>
    <property type="match status" value="1"/>
</dbReference>
<dbReference type="PANTHER" id="PTHR34476:SF1">
    <property type="entry name" value="DNA-DIRECTED RNA POLYMERASE SUBUNIT OMEGA"/>
    <property type="match status" value="1"/>
</dbReference>
<dbReference type="Pfam" id="PF01192">
    <property type="entry name" value="RNA_pol_Rpb6"/>
    <property type="match status" value="1"/>
</dbReference>
<dbReference type="SMART" id="SM01409">
    <property type="entry name" value="RNA_pol_Rpb6"/>
    <property type="match status" value="1"/>
</dbReference>
<dbReference type="SUPFAM" id="SSF63562">
    <property type="entry name" value="RPB6/omega subunit-like"/>
    <property type="match status" value="1"/>
</dbReference>
<reference key="1">
    <citation type="submission" date="2008-01" db="EMBL/GenBank/DDBJ databases">
        <title>Complete sequence of Thermoanaerobacter sp. X514.</title>
        <authorList>
            <consortium name="US DOE Joint Genome Institute"/>
            <person name="Copeland A."/>
            <person name="Lucas S."/>
            <person name="Lapidus A."/>
            <person name="Barry K."/>
            <person name="Glavina del Rio T."/>
            <person name="Dalin E."/>
            <person name="Tice H."/>
            <person name="Pitluck S."/>
            <person name="Bruce D."/>
            <person name="Goodwin L."/>
            <person name="Saunders E."/>
            <person name="Brettin T."/>
            <person name="Detter J.C."/>
            <person name="Han C."/>
            <person name="Schmutz J."/>
            <person name="Larimer F."/>
            <person name="Land M."/>
            <person name="Hauser L."/>
            <person name="Kyrpides N."/>
            <person name="Kim E."/>
            <person name="Hemme C."/>
            <person name="Fields M.W."/>
            <person name="He Z."/>
            <person name="Zhou J."/>
            <person name="Richardson P."/>
        </authorList>
    </citation>
    <scope>NUCLEOTIDE SEQUENCE [LARGE SCALE GENOMIC DNA]</scope>
    <source>
        <strain>X514</strain>
    </source>
</reference>
<feature type="chain" id="PRO_1000121285" description="DNA-directed RNA polymerase subunit omega">
    <location>
        <begin position="1"/>
        <end position="70"/>
    </location>
</feature>
<proteinExistence type="inferred from homology"/>
<name>RPOZ_THEPX</name>
<sequence length="70" mass="7872">MILYPSIVDLMEKVDSKYTLCSLVAKRARQLIAGDTKLVDIDSDKPVTIATEEVNNGLITYQRPQKYGIK</sequence>
<accession>B0K295</accession>